<dbReference type="EC" id="6.3.2.6" evidence="1"/>
<dbReference type="EMBL" id="CP001132">
    <property type="protein sequence ID" value="ACH84206.1"/>
    <property type="molecule type" value="Genomic_DNA"/>
</dbReference>
<dbReference type="RefSeq" id="WP_012537146.1">
    <property type="nucleotide sequence ID" value="NC_011206.1"/>
</dbReference>
<dbReference type="SMR" id="B5ELM2"/>
<dbReference type="GeneID" id="65281448"/>
<dbReference type="KEGG" id="afe:Lferr_1989"/>
<dbReference type="eggNOG" id="COG0152">
    <property type="taxonomic scope" value="Bacteria"/>
</dbReference>
<dbReference type="HOGENOM" id="CLU_061495_2_0_6"/>
<dbReference type="UniPathway" id="UPA00074">
    <property type="reaction ID" value="UER00131"/>
</dbReference>
<dbReference type="GO" id="GO:0005829">
    <property type="term" value="C:cytosol"/>
    <property type="evidence" value="ECO:0007669"/>
    <property type="project" value="TreeGrafter"/>
</dbReference>
<dbReference type="GO" id="GO:0005524">
    <property type="term" value="F:ATP binding"/>
    <property type="evidence" value="ECO:0007669"/>
    <property type="project" value="UniProtKB-KW"/>
</dbReference>
<dbReference type="GO" id="GO:0004639">
    <property type="term" value="F:phosphoribosylaminoimidazolesuccinocarboxamide synthase activity"/>
    <property type="evidence" value="ECO:0007669"/>
    <property type="project" value="UniProtKB-UniRule"/>
</dbReference>
<dbReference type="GO" id="GO:0006189">
    <property type="term" value="P:'de novo' IMP biosynthetic process"/>
    <property type="evidence" value="ECO:0007669"/>
    <property type="project" value="UniProtKB-UniRule"/>
</dbReference>
<dbReference type="GO" id="GO:0009236">
    <property type="term" value="P:cobalamin biosynthetic process"/>
    <property type="evidence" value="ECO:0007669"/>
    <property type="project" value="InterPro"/>
</dbReference>
<dbReference type="CDD" id="cd01415">
    <property type="entry name" value="SAICAR_synt_PurC"/>
    <property type="match status" value="1"/>
</dbReference>
<dbReference type="FunFam" id="3.30.470.20:FF:000006">
    <property type="entry name" value="Phosphoribosylaminoimidazole-succinocarboxamide synthase"/>
    <property type="match status" value="1"/>
</dbReference>
<dbReference type="Gene3D" id="3.30.470.20">
    <property type="entry name" value="ATP-grasp fold, B domain"/>
    <property type="match status" value="1"/>
</dbReference>
<dbReference type="Gene3D" id="3.30.200.20">
    <property type="entry name" value="Phosphorylase Kinase, domain 1"/>
    <property type="match status" value="1"/>
</dbReference>
<dbReference type="HAMAP" id="MF_00137">
    <property type="entry name" value="SAICAR_synth"/>
    <property type="match status" value="1"/>
</dbReference>
<dbReference type="InterPro" id="IPR028923">
    <property type="entry name" value="SAICAR_synt/ADE2_N"/>
</dbReference>
<dbReference type="InterPro" id="IPR033934">
    <property type="entry name" value="SAICAR_synt_PurC"/>
</dbReference>
<dbReference type="InterPro" id="IPR001636">
    <property type="entry name" value="SAICAR_synth"/>
</dbReference>
<dbReference type="InterPro" id="IPR050089">
    <property type="entry name" value="SAICAR_synthetase"/>
</dbReference>
<dbReference type="InterPro" id="IPR018236">
    <property type="entry name" value="SAICAR_synthetase_CS"/>
</dbReference>
<dbReference type="NCBIfam" id="TIGR00081">
    <property type="entry name" value="purC"/>
    <property type="match status" value="1"/>
</dbReference>
<dbReference type="PANTHER" id="PTHR43599">
    <property type="entry name" value="MULTIFUNCTIONAL PROTEIN ADE2"/>
    <property type="match status" value="1"/>
</dbReference>
<dbReference type="PANTHER" id="PTHR43599:SF3">
    <property type="entry name" value="SI:DKEY-6E2.2"/>
    <property type="match status" value="1"/>
</dbReference>
<dbReference type="Pfam" id="PF01259">
    <property type="entry name" value="SAICAR_synt"/>
    <property type="match status" value="1"/>
</dbReference>
<dbReference type="SUPFAM" id="SSF56104">
    <property type="entry name" value="SAICAR synthase-like"/>
    <property type="match status" value="1"/>
</dbReference>
<dbReference type="PROSITE" id="PS01057">
    <property type="entry name" value="SAICAR_SYNTHETASE_1"/>
    <property type="match status" value="1"/>
</dbReference>
<dbReference type="PROSITE" id="PS01058">
    <property type="entry name" value="SAICAR_SYNTHETASE_2"/>
    <property type="match status" value="1"/>
</dbReference>
<proteinExistence type="inferred from homology"/>
<protein>
    <recommendedName>
        <fullName evidence="1">Phosphoribosylaminoimidazole-succinocarboxamide synthase</fullName>
        <ecNumber evidence="1">6.3.2.6</ecNumber>
    </recommendedName>
    <alternativeName>
        <fullName evidence="1">SAICAR synthetase</fullName>
    </alternativeName>
</protein>
<name>PUR7_ACIF5</name>
<organism>
    <name type="scientific">Acidithiobacillus ferrooxidans (strain ATCC 53993 / BNL-5-31)</name>
    <name type="common">Leptospirillum ferrooxidans (ATCC 53993)</name>
    <dbReference type="NCBI Taxonomy" id="380394"/>
    <lineage>
        <taxon>Bacteria</taxon>
        <taxon>Pseudomonadati</taxon>
        <taxon>Pseudomonadota</taxon>
        <taxon>Acidithiobacillia</taxon>
        <taxon>Acidithiobacillales</taxon>
        <taxon>Acidithiobacillaceae</taxon>
        <taxon>Acidithiobacillus</taxon>
    </lineage>
</organism>
<accession>B5ELM2</accession>
<keyword id="KW-0067">ATP-binding</keyword>
<keyword id="KW-0436">Ligase</keyword>
<keyword id="KW-0547">Nucleotide-binding</keyword>
<keyword id="KW-0658">Purine biosynthesis</keyword>
<reference key="1">
    <citation type="submission" date="2008-08" db="EMBL/GenBank/DDBJ databases">
        <title>Complete sequence of Acidithiobacillus ferrooxidans ATCC 53993.</title>
        <authorList>
            <person name="Lucas S."/>
            <person name="Copeland A."/>
            <person name="Lapidus A."/>
            <person name="Glavina del Rio T."/>
            <person name="Dalin E."/>
            <person name="Tice H."/>
            <person name="Bruce D."/>
            <person name="Goodwin L."/>
            <person name="Pitluck S."/>
            <person name="Sims D."/>
            <person name="Brettin T."/>
            <person name="Detter J.C."/>
            <person name="Han C."/>
            <person name="Kuske C.R."/>
            <person name="Larimer F."/>
            <person name="Land M."/>
            <person name="Hauser L."/>
            <person name="Kyrpides N."/>
            <person name="Lykidis A."/>
            <person name="Borole A.P."/>
        </authorList>
    </citation>
    <scope>NUCLEOTIDE SEQUENCE [LARGE SCALE GENOMIC DNA]</scope>
    <source>
        <strain>ATCC 53993 / BNL-5-31</strain>
    </source>
</reference>
<feature type="chain" id="PRO_1000095961" description="Phosphoribosylaminoimidazole-succinocarboxamide synthase">
    <location>
        <begin position="1"/>
        <end position="240"/>
    </location>
</feature>
<comment type="catalytic activity">
    <reaction evidence="1">
        <text>5-amino-1-(5-phospho-D-ribosyl)imidazole-4-carboxylate + L-aspartate + ATP = (2S)-2-[5-amino-1-(5-phospho-beta-D-ribosyl)imidazole-4-carboxamido]succinate + ADP + phosphate + 2 H(+)</text>
        <dbReference type="Rhea" id="RHEA:22628"/>
        <dbReference type="ChEBI" id="CHEBI:15378"/>
        <dbReference type="ChEBI" id="CHEBI:29991"/>
        <dbReference type="ChEBI" id="CHEBI:30616"/>
        <dbReference type="ChEBI" id="CHEBI:43474"/>
        <dbReference type="ChEBI" id="CHEBI:58443"/>
        <dbReference type="ChEBI" id="CHEBI:77657"/>
        <dbReference type="ChEBI" id="CHEBI:456216"/>
        <dbReference type="EC" id="6.3.2.6"/>
    </reaction>
</comment>
<comment type="pathway">
    <text evidence="1">Purine metabolism; IMP biosynthesis via de novo pathway; 5-amino-1-(5-phospho-D-ribosyl)imidazole-4-carboxamide from 5-amino-1-(5-phospho-D-ribosyl)imidazole-4-carboxylate: step 1/2.</text>
</comment>
<comment type="similarity">
    <text evidence="1">Belongs to the SAICAR synthetase family.</text>
</comment>
<sequence>MNERIALYEGKAKIVYASESPDELVLHFKDDTSAFDGEKVEQLAHKGEINNAFNAFIMEYLQGEGVPTHFIRRLNARESLVRRLEMIPVECVVRNRAAGSLSKRLGIEEGRVLEPPTLEFFLKNDALHDPMINTSHIRTFGWATAEEVEAMRRWTMRVNMLLSALFAKANLILVDFKLEFGRFDGELYLGDEFSPDGCRLWDALSLEKMDKDRFRRGLGGVVEAYAEVARRLGVPLPAAS</sequence>
<evidence type="ECO:0000255" key="1">
    <source>
        <dbReference type="HAMAP-Rule" id="MF_00137"/>
    </source>
</evidence>
<gene>
    <name evidence="1" type="primary">purC</name>
    <name type="ordered locus">Lferr_1989</name>
</gene>